<keyword id="KW-0272">Extracellular matrix</keyword>
<keyword id="KW-0560">Oxidoreductase</keyword>
<keyword id="KW-1185">Reference proteome</keyword>
<keyword id="KW-0964">Secreted</keyword>
<keyword id="KW-0732">Signal</keyword>
<organism>
    <name type="scientific">Xenopus laevis</name>
    <name type="common">African clawed frog</name>
    <dbReference type="NCBI Taxonomy" id="8355"/>
    <lineage>
        <taxon>Eukaryota</taxon>
        <taxon>Metazoa</taxon>
        <taxon>Chordata</taxon>
        <taxon>Craniata</taxon>
        <taxon>Vertebrata</taxon>
        <taxon>Euteleostomi</taxon>
        <taxon>Amphibia</taxon>
        <taxon>Batrachia</taxon>
        <taxon>Anura</taxon>
        <taxon>Pipoidea</taxon>
        <taxon>Pipidae</taxon>
        <taxon>Xenopodinae</taxon>
        <taxon>Xenopus</taxon>
        <taxon>Xenopus</taxon>
    </lineage>
</organism>
<reference key="1">
    <citation type="submission" date="2003-01" db="EMBL/GenBank/DDBJ databases">
        <authorList>
            <consortium name="NIH - Xenopus Gene Collection (XGC) project"/>
        </authorList>
    </citation>
    <scope>NUCLEOTIDE SEQUENCE [LARGE SCALE MRNA]</scope>
    <source>
        <tissue>Embryo</tissue>
        <tissue>Larva</tissue>
    </source>
</reference>
<proteinExistence type="evidence at transcript level"/>
<protein>
    <recommendedName>
        <fullName>Glucose-fructose oxidoreductase domain-containing protein 2</fullName>
        <ecNumber>1.-.-.-</ecNumber>
    </recommendedName>
</protein>
<evidence type="ECO:0000250" key="1"/>
<evidence type="ECO:0000255" key="2"/>
<evidence type="ECO:0000256" key="3">
    <source>
        <dbReference type="SAM" id="MobiDB-lite"/>
    </source>
</evidence>
<evidence type="ECO:0000305" key="4"/>
<comment type="function">
    <text evidence="1">Promotes matrix assembly.</text>
</comment>
<comment type="subcellular location">
    <subcellularLocation>
        <location evidence="1">Secreted</location>
        <location evidence="1">Extracellular space</location>
        <location evidence="1">Extracellular matrix</location>
    </subcellularLocation>
</comment>
<comment type="similarity">
    <text evidence="4">Belongs to the Gfo/Idh/MocA family.</text>
</comment>
<accession>Q7ZY75</accession>
<feature type="signal peptide" evidence="2">
    <location>
        <begin position="1"/>
        <end position="25"/>
    </location>
</feature>
<feature type="chain" id="PRO_0000282974" description="Glucose-fructose oxidoreductase domain-containing protein 2">
    <location>
        <begin position="26"/>
        <end position="384"/>
    </location>
</feature>
<feature type="region of interest" description="Disordered" evidence="3">
    <location>
        <begin position="358"/>
        <end position="384"/>
    </location>
</feature>
<feature type="compositionally biased region" description="Polar residues" evidence="3">
    <location>
        <begin position="372"/>
        <end position="384"/>
    </location>
</feature>
<name>GFOD2_XENLA</name>
<sequence length="384" mass="42546">MMTLPGIGVFGTGNTARVLIQLLRAEGFSIEALWGKTDEDAKVVAEEMGIPFYTSHTDDVLLHQEVDLVCISIPPPLTRQIAVKALGIGKNVICEKAASSLDAFTMVKAARYYPKLMSLVGNALRFLPAFDRMRQLILEQGYVGEIRICDVRVYGGSLLSSNYSWICDDLMGGGGLHTLGTYLVDLLTHLTNKKAEKVHGFLKTFVKQNEAISGIRYVTSDDFCFFQMQMTGGACSTVTLNFNMPGTFVHEVMVVGSAGRLVVRGTELYGQKNSASEEKLLLSEPLTSDIADVSDFDKVPPPYLMGIAHMVKALRQSFQDQEDRRTWDHKPLSVAATFEDGLYMQRVVDAIKRSNRSGEWESVELTNEETDSNQNLSEVIQHNL</sequence>
<gene>
    <name type="primary">gfod2</name>
</gene>
<dbReference type="EC" id="1.-.-.-"/>
<dbReference type="EMBL" id="BC043911">
    <property type="protein sequence ID" value="AAH43911.1"/>
    <property type="molecule type" value="mRNA"/>
</dbReference>
<dbReference type="EMBL" id="BC084383">
    <property type="protein sequence ID" value="AAH84383.1"/>
    <property type="molecule type" value="mRNA"/>
</dbReference>
<dbReference type="RefSeq" id="NP_001079508.1">
    <property type="nucleotide sequence ID" value="NM_001086039.2"/>
</dbReference>
<dbReference type="RefSeq" id="XP_018111913.1">
    <property type="nucleotide sequence ID" value="XM_018256424.1"/>
</dbReference>
<dbReference type="RefSeq" id="XP_018111914.1">
    <property type="nucleotide sequence ID" value="XM_018256425.1"/>
</dbReference>
<dbReference type="SMR" id="Q7ZY75"/>
<dbReference type="DNASU" id="379195"/>
<dbReference type="GeneID" id="379195"/>
<dbReference type="KEGG" id="xla:379195"/>
<dbReference type="AGR" id="Xenbase:XB-GENE-5740241"/>
<dbReference type="CTD" id="379195"/>
<dbReference type="Xenbase" id="XB-GENE-5740241">
    <property type="gene designation" value="gfod2.L"/>
</dbReference>
<dbReference type="OMA" id="YVGEIQV"/>
<dbReference type="OrthoDB" id="446809at2759"/>
<dbReference type="Proteomes" id="UP000186698">
    <property type="component" value="Chromosome 4L"/>
</dbReference>
<dbReference type="Bgee" id="379195">
    <property type="expression patterns" value="Expressed in oocyte and 19 other cell types or tissues"/>
</dbReference>
<dbReference type="GO" id="GO:0031012">
    <property type="term" value="C:extracellular matrix"/>
    <property type="evidence" value="ECO:0000318"/>
    <property type="project" value="GO_Central"/>
</dbReference>
<dbReference type="GO" id="GO:0005576">
    <property type="term" value="C:extracellular region"/>
    <property type="evidence" value="ECO:0007669"/>
    <property type="project" value="UniProtKB-KW"/>
</dbReference>
<dbReference type="GO" id="GO:0000166">
    <property type="term" value="F:nucleotide binding"/>
    <property type="evidence" value="ECO:0007669"/>
    <property type="project" value="InterPro"/>
</dbReference>
<dbReference type="GO" id="GO:0016491">
    <property type="term" value="F:oxidoreductase activity"/>
    <property type="evidence" value="ECO:0007669"/>
    <property type="project" value="UniProtKB-KW"/>
</dbReference>
<dbReference type="GO" id="GO:0030198">
    <property type="term" value="P:extracellular matrix organization"/>
    <property type="evidence" value="ECO:0000318"/>
    <property type="project" value="GO_Central"/>
</dbReference>
<dbReference type="FunFam" id="3.30.360.10:FF:000025">
    <property type="entry name" value="Glucose-fructose oxidoreductase domain-containing protein 2"/>
    <property type="match status" value="1"/>
</dbReference>
<dbReference type="Gene3D" id="3.30.360.10">
    <property type="entry name" value="Dihydrodipicolinate Reductase, domain 2"/>
    <property type="match status" value="1"/>
</dbReference>
<dbReference type="Gene3D" id="3.40.50.720">
    <property type="entry name" value="NAD(P)-binding Rossmann-like Domain"/>
    <property type="match status" value="1"/>
</dbReference>
<dbReference type="InterPro" id="IPR000683">
    <property type="entry name" value="Gfo/Idh/MocA-like_OxRdtase_N"/>
</dbReference>
<dbReference type="InterPro" id="IPR050463">
    <property type="entry name" value="Gfo/Idh/MocA_oxidrdct_glycsds"/>
</dbReference>
<dbReference type="InterPro" id="IPR055170">
    <property type="entry name" value="GFO_IDH_MocA-like_dom"/>
</dbReference>
<dbReference type="InterPro" id="IPR036291">
    <property type="entry name" value="NAD(P)-bd_dom_sf"/>
</dbReference>
<dbReference type="PANTHER" id="PTHR43818">
    <property type="entry name" value="BCDNA.GH03377"/>
    <property type="match status" value="1"/>
</dbReference>
<dbReference type="PANTHER" id="PTHR43818:SF8">
    <property type="entry name" value="GLUCOSE-FRUCTOSE OXIDOREDUCTASE DOMAIN-CONTAINING PROTEIN 2"/>
    <property type="match status" value="1"/>
</dbReference>
<dbReference type="Pfam" id="PF01408">
    <property type="entry name" value="GFO_IDH_MocA"/>
    <property type="match status" value="1"/>
</dbReference>
<dbReference type="Pfam" id="PF22725">
    <property type="entry name" value="GFO_IDH_MocA_C3"/>
    <property type="match status" value="1"/>
</dbReference>
<dbReference type="SUPFAM" id="SSF55347">
    <property type="entry name" value="Glyceraldehyde-3-phosphate dehydrogenase-like, C-terminal domain"/>
    <property type="match status" value="1"/>
</dbReference>
<dbReference type="SUPFAM" id="SSF51735">
    <property type="entry name" value="NAD(P)-binding Rossmann-fold domains"/>
    <property type="match status" value="1"/>
</dbReference>